<reference key="1">
    <citation type="journal article" date="2008" name="J. Bacteriol.">
        <title>Complete genome sequence of the mosquitocidal bacterium Bacillus sphaericus C3-41 and comparison with those of closely related Bacillus species.</title>
        <authorList>
            <person name="Hu X."/>
            <person name="Fan W."/>
            <person name="Han B."/>
            <person name="Liu H."/>
            <person name="Zheng D."/>
            <person name="Li Q."/>
            <person name="Dong W."/>
            <person name="Yan J."/>
            <person name="Gao M."/>
            <person name="Berry C."/>
            <person name="Yuan Z."/>
        </authorList>
    </citation>
    <scope>NUCLEOTIDE SEQUENCE [LARGE SCALE GENOMIC DNA]</scope>
    <source>
        <strain>C3-41</strain>
    </source>
</reference>
<comment type="function">
    <text evidence="1">Catalyzes the irreversible cleavage of the glycosidic bond in both 5'-methylthioadenosine (MTA) and S-adenosylhomocysteine (SAH/AdoHcy) to adenine and the corresponding thioribose, 5'-methylthioribose and S-ribosylhomocysteine, respectively. Also cleaves 5'-deoxyadenosine, a toxic by-product of radical S-adenosylmethionine (SAM) enzymes, into 5-deoxyribose and adenine.</text>
</comment>
<comment type="catalytic activity">
    <reaction evidence="1">
        <text>S-adenosyl-L-homocysteine + H2O = S-(5-deoxy-D-ribos-5-yl)-L-homocysteine + adenine</text>
        <dbReference type="Rhea" id="RHEA:17805"/>
        <dbReference type="ChEBI" id="CHEBI:15377"/>
        <dbReference type="ChEBI" id="CHEBI:16708"/>
        <dbReference type="ChEBI" id="CHEBI:57856"/>
        <dbReference type="ChEBI" id="CHEBI:58195"/>
        <dbReference type="EC" id="3.2.2.9"/>
    </reaction>
</comment>
<comment type="catalytic activity">
    <reaction evidence="1">
        <text>S-methyl-5'-thioadenosine + H2O = 5-(methylsulfanyl)-D-ribose + adenine</text>
        <dbReference type="Rhea" id="RHEA:13617"/>
        <dbReference type="ChEBI" id="CHEBI:15377"/>
        <dbReference type="ChEBI" id="CHEBI:16708"/>
        <dbReference type="ChEBI" id="CHEBI:17509"/>
        <dbReference type="ChEBI" id="CHEBI:78440"/>
        <dbReference type="EC" id="3.2.2.9"/>
    </reaction>
</comment>
<comment type="catalytic activity">
    <reaction evidence="1">
        <text>5'-deoxyadenosine + H2O = 5-deoxy-D-ribose + adenine</text>
        <dbReference type="Rhea" id="RHEA:29859"/>
        <dbReference type="ChEBI" id="CHEBI:15377"/>
        <dbReference type="ChEBI" id="CHEBI:16708"/>
        <dbReference type="ChEBI" id="CHEBI:17319"/>
        <dbReference type="ChEBI" id="CHEBI:149540"/>
        <dbReference type="EC" id="3.2.2.9"/>
    </reaction>
    <physiologicalReaction direction="left-to-right" evidence="1">
        <dbReference type="Rhea" id="RHEA:29860"/>
    </physiologicalReaction>
</comment>
<comment type="pathway">
    <text evidence="1">Amino-acid biosynthesis; L-methionine biosynthesis via salvage pathway; S-methyl-5-thio-alpha-D-ribose 1-phosphate from S-methyl-5'-thioadenosine (hydrolase route): step 1/2.</text>
</comment>
<comment type="similarity">
    <text evidence="1">Belongs to the PNP/UDP phosphorylase family. MtnN subfamily.</text>
</comment>
<keyword id="KW-0028">Amino-acid biosynthesis</keyword>
<keyword id="KW-0378">Hydrolase</keyword>
<keyword id="KW-0486">Methionine biosynthesis</keyword>
<sequence>MKIAVIGAMEEEVELLRASLNNAQRTTIAGSEYTTGTYEGKEVVLLKSGIGKVNAAMSTTILLHEFKPDVVINTGSAGGYDEALEVGAVVISDEVRHHDVDVTIFGYEIGQMAGMPAAYKSDERLMKVAEEAVKAVGEHQYGIGLICSGDAFMNDPERVEAVRHHFPQMKAVEMEAAAVAQVCYQFATPFVVIRALSDIAGKESNISFDEFLPVAAKHSTQVVLKAIASL</sequence>
<proteinExistence type="inferred from homology"/>
<dbReference type="EC" id="3.2.2.9" evidence="1"/>
<dbReference type="EMBL" id="CP000817">
    <property type="protein sequence ID" value="ACA41336.1"/>
    <property type="molecule type" value="Genomic_DNA"/>
</dbReference>
<dbReference type="RefSeq" id="WP_012295382.1">
    <property type="nucleotide sequence ID" value="NC_010382.1"/>
</dbReference>
<dbReference type="SMR" id="B1HUJ1"/>
<dbReference type="EnsemblBacteria" id="ACA41336">
    <property type="protein sequence ID" value="ACA41336"/>
    <property type="gene ID" value="Bsph_3858"/>
</dbReference>
<dbReference type="KEGG" id="lsp:Bsph_3858"/>
<dbReference type="HOGENOM" id="CLU_031248_2_2_9"/>
<dbReference type="UniPathway" id="UPA00904">
    <property type="reaction ID" value="UER00871"/>
</dbReference>
<dbReference type="Proteomes" id="UP000002164">
    <property type="component" value="Chromosome"/>
</dbReference>
<dbReference type="GO" id="GO:0005829">
    <property type="term" value="C:cytosol"/>
    <property type="evidence" value="ECO:0007669"/>
    <property type="project" value="TreeGrafter"/>
</dbReference>
<dbReference type="GO" id="GO:0008782">
    <property type="term" value="F:adenosylhomocysteine nucleosidase activity"/>
    <property type="evidence" value="ECO:0007669"/>
    <property type="project" value="UniProtKB-UniRule"/>
</dbReference>
<dbReference type="GO" id="GO:0008930">
    <property type="term" value="F:methylthioadenosine nucleosidase activity"/>
    <property type="evidence" value="ECO:0007669"/>
    <property type="project" value="UniProtKB-UniRule"/>
</dbReference>
<dbReference type="GO" id="GO:0019509">
    <property type="term" value="P:L-methionine salvage from methylthioadenosine"/>
    <property type="evidence" value="ECO:0007669"/>
    <property type="project" value="UniProtKB-UniRule"/>
</dbReference>
<dbReference type="GO" id="GO:0019284">
    <property type="term" value="P:L-methionine salvage from S-adenosylmethionine"/>
    <property type="evidence" value="ECO:0007669"/>
    <property type="project" value="TreeGrafter"/>
</dbReference>
<dbReference type="GO" id="GO:0009164">
    <property type="term" value="P:nucleoside catabolic process"/>
    <property type="evidence" value="ECO:0007669"/>
    <property type="project" value="InterPro"/>
</dbReference>
<dbReference type="CDD" id="cd09008">
    <property type="entry name" value="MTAN"/>
    <property type="match status" value="1"/>
</dbReference>
<dbReference type="FunFam" id="3.40.50.1580:FF:000001">
    <property type="entry name" value="MTA/SAH nucleosidase family protein"/>
    <property type="match status" value="1"/>
</dbReference>
<dbReference type="Gene3D" id="3.40.50.1580">
    <property type="entry name" value="Nucleoside phosphorylase domain"/>
    <property type="match status" value="1"/>
</dbReference>
<dbReference type="HAMAP" id="MF_01684">
    <property type="entry name" value="Salvage_MtnN"/>
    <property type="match status" value="1"/>
</dbReference>
<dbReference type="InterPro" id="IPR010049">
    <property type="entry name" value="MTA_SAH_Nsdase"/>
</dbReference>
<dbReference type="InterPro" id="IPR000845">
    <property type="entry name" value="Nucleoside_phosphorylase_d"/>
</dbReference>
<dbReference type="InterPro" id="IPR035994">
    <property type="entry name" value="Nucleoside_phosphorylase_sf"/>
</dbReference>
<dbReference type="NCBIfam" id="TIGR01704">
    <property type="entry name" value="MTA_SAH-Nsdase"/>
    <property type="match status" value="1"/>
</dbReference>
<dbReference type="NCBIfam" id="NF004079">
    <property type="entry name" value="PRK05584.1"/>
    <property type="match status" value="1"/>
</dbReference>
<dbReference type="PANTHER" id="PTHR46832">
    <property type="entry name" value="5'-METHYLTHIOADENOSINE/S-ADENOSYLHOMOCYSTEINE NUCLEOSIDASE"/>
    <property type="match status" value="1"/>
</dbReference>
<dbReference type="PANTHER" id="PTHR46832:SF1">
    <property type="entry name" value="5'-METHYLTHIOADENOSINE_S-ADENOSYLHOMOCYSTEINE NUCLEOSIDASE"/>
    <property type="match status" value="1"/>
</dbReference>
<dbReference type="Pfam" id="PF01048">
    <property type="entry name" value="PNP_UDP_1"/>
    <property type="match status" value="1"/>
</dbReference>
<dbReference type="SUPFAM" id="SSF53167">
    <property type="entry name" value="Purine and uridine phosphorylases"/>
    <property type="match status" value="1"/>
</dbReference>
<name>MTNN_LYSSC</name>
<accession>B1HUJ1</accession>
<evidence type="ECO:0000255" key="1">
    <source>
        <dbReference type="HAMAP-Rule" id="MF_01684"/>
    </source>
</evidence>
<protein>
    <recommendedName>
        <fullName evidence="1">5'-methylthioadenosine/S-adenosylhomocysteine nucleosidase</fullName>
        <shortName evidence="1">MTA/SAH nucleosidase</shortName>
        <shortName evidence="1">MTAN</shortName>
        <ecNumber evidence="1">3.2.2.9</ecNumber>
    </recommendedName>
    <alternativeName>
        <fullName evidence="1">5'-deoxyadenosine nucleosidase</fullName>
        <shortName evidence="1">DOA nucleosidase</shortName>
        <shortName evidence="1">dAdo nucleosidase</shortName>
    </alternativeName>
    <alternativeName>
        <fullName evidence="1">5'-methylthioadenosine nucleosidase</fullName>
        <shortName evidence="1">MTA nucleosidase</shortName>
    </alternativeName>
    <alternativeName>
        <fullName evidence="1">S-adenosylhomocysteine nucleosidase</fullName>
        <shortName evidence="1">AdoHcy nucleosidase</shortName>
        <shortName evidence="1">SAH nucleosidase</shortName>
        <shortName evidence="1">SRH nucleosidase</shortName>
    </alternativeName>
</protein>
<organism>
    <name type="scientific">Lysinibacillus sphaericus (strain C3-41)</name>
    <dbReference type="NCBI Taxonomy" id="444177"/>
    <lineage>
        <taxon>Bacteria</taxon>
        <taxon>Bacillati</taxon>
        <taxon>Bacillota</taxon>
        <taxon>Bacilli</taxon>
        <taxon>Bacillales</taxon>
        <taxon>Bacillaceae</taxon>
        <taxon>Lysinibacillus</taxon>
    </lineage>
</organism>
<gene>
    <name evidence="1" type="primary">mtnN</name>
    <name type="ordered locus">Bsph_3858</name>
</gene>
<feature type="chain" id="PRO_0000359316" description="5'-methylthioadenosine/S-adenosylhomocysteine nucleosidase">
    <location>
        <begin position="1"/>
        <end position="230"/>
    </location>
</feature>
<feature type="active site" description="Proton acceptor" evidence="1">
    <location>
        <position position="12"/>
    </location>
</feature>
<feature type="active site" description="Proton donor" evidence="1">
    <location>
        <position position="198"/>
    </location>
</feature>
<feature type="binding site" evidence="1">
    <location>
        <position position="78"/>
    </location>
    <ligand>
        <name>substrate</name>
    </ligand>
</feature>
<feature type="binding site" evidence="1">
    <location>
        <position position="153"/>
    </location>
    <ligand>
        <name>substrate</name>
    </ligand>
</feature>
<feature type="binding site" evidence="1">
    <location>
        <begin position="174"/>
        <end position="175"/>
    </location>
    <ligand>
        <name>substrate</name>
    </ligand>
</feature>